<proteinExistence type="inferred from homology"/>
<accession>Q8A029</accession>
<gene>
    <name evidence="1" type="primary">lipA</name>
    <name type="ordered locus">BT_4192</name>
</gene>
<dbReference type="EC" id="2.8.1.8" evidence="1"/>
<dbReference type="EMBL" id="AE015928">
    <property type="protein sequence ID" value="AAO79297.1"/>
    <property type="molecule type" value="Genomic_DNA"/>
</dbReference>
<dbReference type="RefSeq" id="NP_813103.1">
    <property type="nucleotide sequence ID" value="NC_004663.1"/>
</dbReference>
<dbReference type="RefSeq" id="WP_008764405.1">
    <property type="nucleotide sequence ID" value="NC_004663.1"/>
</dbReference>
<dbReference type="SMR" id="Q8A029"/>
<dbReference type="FunCoup" id="Q8A029">
    <property type="interactions" value="535"/>
</dbReference>
<dbReference type="STRING" id="226186.BT_4192"/>
<dbReference type="PaxDb" id="226186-BT_4192"/>
<dbReference type="EnsemblBacteria" id="AAO79297">
    <property type="protein sequence ID" value="AAO79297"/>
    <property type="gene ID" value="BT_4192"/>
</dbReference>
<dbReference type="GeneID" id="60925366"/>
<dbReference type="KEGG" id="bth:BT_4192"/>
<dbReference type="PATRIC" id="fig|226186.12.peg.4260"/>
<dbReference type="eggNOG" id="COG0320">
    <property type="taxonomic scope" value="Bacteria"/>
</dbReference>
<dbReference type="HOGENOM" id="CLU_033144_2_1_10"/>
<dbReference type="InParanoid" id="Q8A029"/>
<dbReference type="OrthoDB" id="9787898at2"/>
<dbReference type="UniPathway" id="UPA00538">
    <property type="reaction ID" value="UER00593"/>
</dbReference>
<dbReference type="Proteomes" id="UP000001414">
    <property type="component" value="Chromosome"/>
</dbReference>
<dbReference type="GO" id="GO:0005737">
    <property type="term" value="C:cytoplasm"/>
    <property type="evidence" value="ECO:0007669"/>
    <property type="project" value="UniProtKB-SubCell"/>
</dbReference>
<dbReference type="GO" id="GO:0051539">
    <property type="term" value="F:4 iron, 4 sulfur cluster binding"/>
    <property type="evidence" value="ECO:0007669"/>
    <property type="project" value="UniProtKB-UniRule"/>
</dbReference>
<dbReference type="GO" id="GO:0016992">
    <property type="term" value="F:lipoate synthase activity"/>
    <property type="evidence" value="ECO:0007669"/>
    <property type="project" value="UniProtKB-UniRule"/>
</dbReference>
<dbReference type="GO" id="GO:0046872">
    <property type="term" value="F:metal ion binding"/>
    <property type="evidence" value="ECO:0007669"/>
    <property type="project" value="UniProtKB-KW"/>
</dbReference>
<dbReference type="CDD" id="cd01335">
    <property type="entry name" value="Radical_SAM"/>
    <property type="match status" value="1"/>
</dbReference>
<dbReference type="FunFam" id="3.20.20.70:FF:000271">
    <property type="entry name" value="Lipoyl synthase"/>
    <property type="match status" value="1"/>
</dbReference>
<dbReference type="Gene3D" id="3.20.20.70">
    <property type="entry name" value="Aldolase class I"/>
    <property type="match status" value="1"/>
</dbReference>
<dbReference type="HAMAP" id="MF_00206">
    <property type="entry name" value="Lipoyl_synth"/>
    <property type="match status" value="1"/>
</dbReference>
<dbReference type="InterPro" id="IPR013785">
    <property type="entry name" value="Aldolase_TIM"/>
</dbReference>
<dbReference type="InterPro" id="IPR006638">
    <property type="entry name" value="Elp3/MiaA/NifB-like_rSAM"/>
</dbReference>
<dbReference type="InterPro" id="IPR003698">
    <property type="entry name" value="Lipoyl_synth"/>
</dbReference>
<dbReference type="InterPro" id="IPR007197">
    <property type="entry name" value="rSAM"/>
</dbReference>
<dbReference type="NCBIfam" id="TIGR00510">
    <property type="entry name" value="lipA"/>
    <property type="match status" value="1"/>
</dbReference>
<dbReference type="NCBIfam" id="NF004019">
    <property type="entry name" value="PRK05481.1"/>
    <property type="match status" value="1"/>
</dbReference>
<dbReference type="NCBIfam" id="NF009544">
    <property type="entry name" value="PRK12928.1"/>
    <property type="match status" value="1"/>
</dbReference>
<dbReference type="PANTHER" id="PTHR10949">
    <property type="entry name" value="LIPOYL SYNTHASE"/>
    <property type="match status" value="1"/>
</dbReference>
<dbReference type="PANTHER" id="PTHR10949:SF0">
    <property type="entry name" value="LIPOYL SYNTHASE, MITOCHONDRIAL"/>
    <property type="match status" value="1"/>
</dbReference>
<dbReference type="Pfam" id="PF04055">
    <property type="entry name" value="Radical_SAM"/>
    <property type="match status" value="1"/>
</dbReference>
<dbReference type="PIRSF" id="PIRSF005963">
    <property type="entry name" value="Lipoyl_synth"/>
    <property type="match status" value="1"/>
</dbReference>
<dbReference type="SFLD" id="SFLDF00271">
    <property type="entry name" value="lipoyl_synthase"/>
    <property type="match status" value="1"/>
</dbReference>
<dbReference type="SFLD" id="SFLDS00029">
    <property type="entry name" value="Radical_SAM"/>
    <property type="match status" value="1"/>
</dbReference>
<dbReference type="SMART" id="SM00729">
    <property type="entry name" value="Elp3"/>
    <property type="match status" value="1"/>
</dbReference>
<dbReference type="SUPFAM" id="SSF102114">
    <property type="entry name" value="Radical SAM enzymes"/>
    <property type="match status" value="1"/>
</dbReference>
<dbReference type="PROSITE" id="PS51918">
    <property type="entry name" value="RADICAL_SAM"/>
    <property type="match status" value="1"/>
</dbReference>
<keyword id="KW-0004">4Fe-4S</keyword>
<keyword id="KW-0963">Cytoplasm</keyword>
<keyword id="KW-0408">Iron</keyword>
<keyword id="KW-0411">Iron-sulfur</keyword>
<keyword id="KW-0479">Metal-binding</keyword>
<keyword id="KW-1185">Reference proteome</keyword>
<keyword id="KW-0949">S-adenosyl-L-methionine</keyword>
<keyword id="KW-0808">Transferase</keyword>
<comment type="function">
    <text evidence="1">Catalyzes the radical-mediated insertion of two sulfur atoms into the C-6 and C-8 positions of the octanoyl moiety bound to the lipoyl domains of lipoate-dependent enzymes, thereby converting the octanoylated domains into lipoylated derivatives.</text>
</comment>
<comment type="catalytic activity">
    <reaction evidence="1">
        <text>[[Fe-S] cluster scaffold protein carrying a second [4Fe-4S](2+) cluster] + N(6)-octanoyl-L-lysyl-[protein] + 2 oxidized [2Fe-2S]-[ferredoxin] + 2 S-adenosyl-L-methionine + 4 H(+) = [[Fe-S] cluster scaffold protein] + N(6)-[(R)-dihydrolipoyl]-L-lysyl-[protein] + 4 Fe(3+) + 2 hydrogen sulfide + 2 5'-deoxyadenosine + 2 L-methionine + 2 reduced [2Fe-2S]-[ferredoxin]</text>
        <dbReference type="Rhea" id="RHEA:16585"/>
        <dbReference type="Rhea" id="RHEA-COMP:9928"/>
        <dbReference type="Rhea" id="RHEA-COMP:10000"/>
        <dbReference type="Rhea" id="RHEA-COMP:10001"/>
        <dbReference type="Rhea" id="RHEA-COMP:10475"/>
        <dbReference type="Rhea" id="RHEA-COMP:14568"/>
        <dbReference type="Rhea" id="RHEA-COMP:14569"/>
        <dbReference type="ChEBI" id="CHEBI:15378"/>
        <dbReference type="ChEBI" id="CHEBI:17319"/>
        <dbReference type="ChEBI" id="CHEBI:29034"/>
        <dbReference type="ChEBI" id="CHEBI:29919"/>
        <dbReference type="ChEBI" id="CHEBI:33722"/>
        <dbReference type="ChEBI" id="CHEBI:33737"/>
        <dbReference type="ChEBI" id="CHEBI:33738"/>
        <dbReference type="ChEBI" id="CHEBI:57844"/>
        <dbReference type="ChEBI" id="CHEBI:59789"/>
        <dbReference type="ChEBI" id="CHEBI:78809"/>
        <dbReference type="ChEBI" id="CHEBI:83100"/>
        <dbReference type="EC" id="2.8.1.8"/>
    </reaction>
</comment>
<comment type="cofactor">
    <cofactor evidence="1">
        <name>[4Fe-4S] cluster</name>
        <dbReference type="ChEBI" id="CHEBI:49883"/>
    </cofactor>
    <text evidence="1">Binds 2 [4Fe-4S] clusters per subunit. One cluster is coordinated with 3 cysteines and an exchangeable S-adenosyl-L-methionine.</text>
</comment>
<comment type="pathway">
    <text evidence="1">Protein modification; protein lipoylation via endogenous pathway; protein N(6)-(lipoyl)lysine from octanoyl-[acyl-carrier-protein]: step 2/2.</text>
</comment>
<comment type="subcellular location">
    <subcellularLocation>
        <location evidence="1">Cytoplasm</location>
    </subcellularLocation>
</comment>
<comment type="similarity">
    <text evidence="1">Belongs to the radical SAM superfamily. Lipoyl synthase family.</text>
</comment>
<reference key="1">
    <citation type="journal article" date="2003" name="Science">
        <title>A genomic view of the human-Bacteroides thetaiotaomicron symbiosis.</title>
        <authorList>
            <person name="Xu J."/>
            <person name="Bjursell M.K."/>
            <person name="Himrod J."/>
            <person name="Deng S."/>
            <person name="Carmichael L.K."/>
            <person name="Chiang H.C."/>
            <person name="Hooper L.V."/>
            <person name="Gordon J.I."/>
        </authorList>
    </citation>
    <scope>NUCLEOTIDE SEQUENCE [LARGE SCALE GENOMIC DNA]</scope>
    <source>
        <strain>ATCC 29148 / DSM 2079 / JCM 5827 / CCUG 10774 / NCTC 10582 / VPI-5482 / E50</strain>
    </source>
</reference>
<name>LIPA_BACTN</name>
<organism>
    <name type="scientific">Bacteroides thetaiotaomicron (strain ATCC 29148 / DSM 2079 / JCM 5827 / CCUG 10774 / NCTC 10582 / VPI-5482 / E50)</name>
    <dbReference type="NCBI Taxonomy" id="226186"/>
    <lineage>
        <taxon>Bacteria</taxon>
        <taxon>Pseudomonadati</taxon>
        <taxon>Bacteroidota</taxon>
        <taxon>Bacteroidia</taxon>
        <taxon>Bacteroidales</taxon>
        <taxon>Bacteroidaceae</taxon>
        <taxon>Bacteroides</taxon>
    </lineage>
</organism>
<protein>
    <recommendedName>
        <fullName evidence="1">Lipoyl synthase</fullName>
        <ecNumber evidence="1">2.8.1.8</ecNumber>
    </recommendedName>
    <alternativeName>
        <fullName evidence="1">Lip-syn</fullName>
        <shortName evidence="1">LS</shortName>
    </alternativeName>
    <alternativeName>
        <fullName evidence="1">Lipoate synthase</fullName>
    </alternativeName>
    <alternativeName>
        <fullName evidence="1">Lipoic acid synthase</fullName>
    </alternativeName>
    <alternativeName>
        <fullName evidence="1">Sulfur insertion protein LipA</fullName>
    </alternativeName>
</protein>
<feature type="chain" id="PRO_0000102289" description="Lipoyl synthase">
    <location>
        <begin position="1"/>
        <end position="282"/>
    </location>
</feature>
<feature type="domain" description="Radical SAM core" evidence="2">
    <location>
        <begin position="49"/>
        <end position="263"/>
    </location>
</feature>
<feature type="binding site" evidence="1">
    <location>
        <position position="37"/>
    </location>
    <ligand>
        <name>[4Fe-4S] cluster</name>
        <dbReference type="ChEBI" id="CHEBI:49883"/>
        <label>1</label>
    </ligand>
</feature>
<feature type="binding site" evidence="1">
    <location>
        <position position="42"/>
    </location>
    <ligand>
        <name>[4Fe-4S] cluster</name>
        <dbReference type="ChEBI" id="CHEBI:49883"/>
        <label>1</label>
    </ligand>
</feature>
<feature type="binding site" evidence="1">
    <location>
        <position position="48"/>
    </location>
    <ligand>
        <name>[4Fe-4S] cluster</name>
        <dbReference type="ChEBI" id="CHEBI:49883"/>
        <label>1</label>
    </ligand>
</feature>
<feature type="binding site" evidence="1">
    <location>
        <position position="63"/>
    </location>
    <ligand>
        <name>[4Fe-4S] cluster</name>
        <dbReference type="ChEBI" id="CHEBI:49883"/>
        <label>2</label>
        <note>4Fe-4S-S-AdoMet</note>
    </ligand>
</feature>
<feature type="binding site" evidence="1">
    <location>
        <position position="67"/>
    </location>
    <ligand>
        <name>[4Fe-4S] cluster</name>
        <dbReference type="ChEBI" id="CHEBI:49883"/>
        <label>2</label>
        <note>4Fe-4S-S-AdoMet</note>
    </ligand>
</feature>
<feature type="binding site" evidence="1">
    <location>
        <position position="70"/>
    </location>
    <ligand>
        <name>[4Fe-4S] cluster</name>
        <dbReference type="ChEBI" id="CHEBI:49883"/>
        <label>2</label>
        <note>4Fe-4S-S-AdoMet</note>
    </ligand>
</feature>
<feature type="binding site" evidence="1">
    <location>
        <position position="274"/>
    </location>
    <ligand>
        <name>[4Fe-4S] cluster</name>
        <dbReference type="ChEBI" id="CHEBI:49883"/>
        <label>1</label>
    </ligand>
</feature>
<sequence>MADRVRKPEWLKINIGANDRYTETKRIVDSHCLHTICSSGRCPNMGECWGKGTATFMIGGDICTRSCKFCNTQTGRPHPLDANEPTHVAESIALMKLDHAVVTSVDRDDLPDLGAGHWAHTIREIKRLNPQTTIEVLIPDFQGRMELVDLVIEANPDIISHNMETVRRISPLVRSAANYDTSLQVIGHIARSGTKSKSGIMVGLGETPQEVETIMDDLLAVGCQILTIGQYLQPTHRHYPVAEYVTPQQFATYKTIGLEKGFSIVESAPLVRSSYHAEKHIR</sequence>
<evidence type="ECO:0000255" key="1">
    <source>
        <dbReference type="HAMAP-Rule" id="MF_00206"/>
    </source>
</evidence>
<evidence type="ECO:0000255" key="2">
    <source>
        <dbReference type="PROSITE-ProRule" id="PRU01266"/>
    </source>
</evidence>